<dbReference type="EC" id="7.4.2.8" evidence="2"/>
<dbReference type="EMBL" id="U33548">
    <property type="protein sequence ID" value="AAB08461.1"/>
    <property type="molecule type" value="Genomic_DNA"/>
</dbReference>
<dbReference type="EMBL" id="M99174">
    <property type="protein sequence ID" value="AAA27605.1"/>
    <property type="molecule type" value="Genomic_DNA"/>
</dbReference>
<dbReference type="RefSeq" id="WP_008575459.1">
    <property type="nucleotide sequence ID" value="NZ_QFAL01000063.1"/>
</dbReference>
<dbReference type="SMR" id="P80153"/>
<dbReference type="GeneID" id="61777304"/>
<dbReference type="PATRIC" id="fig|456327.29.peg.3430"/>
<dbReference type="OMA" id="EGFKIKP"/>
<dbReference type="GO" id="GO:0005737">
    <property type="term" value="C:cytoplasm"/>
    <property type="evidence" value="ECO:0007669"/>
    <property type="project" value="UniProtKB-SubCell"/>
</dbReference>
<dbReference type="GO" id="GO:0030257">
    <property type="term" value="C:type III protein secretion system complex"/>
    <property type="evidence" value="ECO:0007669"/>
    <property type="project" value="InterPro"/>
</dbReference>
<dbReference type="GO" id="GO:0005524">
    <property type="term" value="F:ATP binding"/>
    <property type="evidence" value="ECO:0007669"/>
    <property type="project" value="UniProtKB-KW"/>
</dbReference>
<dbReference type="GO" id="GO:0016887">
    <property type="term" value="F:ATP hydrolysis activity"/>
    <property type="evidence" value="ECO:0007669"/>
    <property type="project" value="InterPro"/>
</dbReference>
<dbReference type="GO" id="GO:0008564">
    <property type="term" value="F:protein-exporting ATPase activity"/>
    <property type="evidence" value="ECO:0007669"/>
    <property type="project" value="UniProtKB-EC"/>
</dbReference>
<dbReference type="GO" id="GO:0046933">
    <property type="term" value="F:proton-transporting ATP synthase activity, rotational mechanism"/>
    <property type="evidence" value="ECO:0007669"/>
    <property type="project" value="TreeGrafter"/>
</dbReference>
<dbReference type="GO" id="GO:0046961">
    <property type="term" value="F:proton-transporting ATPase activity, rotational mechanism"/>
    <property type="evidence" value="ECO:0007669"/>
    <property type="project" value="InterPro"/>
</dbReference>
<dbReference type="GO" id="GO:0030254">
    <property type="term" value="P:protein secretion by the type III secretion system"/>
    <property type="evidence" value="ECO:0007669"/>
    <property type="project" value="InterPro"/>
</dbReference>
<dbReference type="GO" id="GO:0052040">
    <property type="term" value="P:symbiont-mediated perturbation of host programmed cell death"/>
    <property type="evidence" value="ECO:0007669"/>
    <property type="project" value="UniProtKB-KW"/>
</dbReference>
<dbReference type="CDD" id="cd18117">
    <property type="entry name" value="ATP-synt_flagellum-secretory_path_III_N"/>
    <property type="match status" value="1"/>
</dbReference>
<dbReference type="CDD" id="cd01136">
    <property type="entry name" value="ATPase_flagellum-secretory_path_III"/>
    <property type="match status" value="1"/>
</dbReference>
<dbReference type="FunFam" id="3.40.50.12240:FF:000002">
    <property type="entry name" value="Flagellum-specific ATP synthase FliI"/>
    <property type="match status" value="1"/>
</dbReference>
<dbReference type="Gene3D" id="3.40.50.12240">
    <property type="match status" value="1"/>
</dbReference>
<dbReference type="InterPro" id="IPR003593">
    <property type="entry name" value="AAA+_ATPase"/>
</dbReference>
<dbReference type="InterPro" id="IPR020003">
    <property type="entry name" value="ATPase_a/bsu_AS"/>
</dbReference>
<dbReference type="InterPro" id="IPR050053">
    <property type="entry name" value="ATPase_alpha/beta_chains"/>
</dbReference>
<dbReference type="InterPro" id="IPR004100">
    <property type="entry name" value="ATPase_F1/V1/A1_a/bsu_N"/>
</dbReference>
<dbReference type="InterPro" id="IPR000194">
    <property type="entry name" value="ATPase_F1/V1/A1_a/bsu_nucl-bd"/>
</dbReference>
<dbReference type="InterPro" id="IPR005714">
    <property type="entry name" value="ATPase_T3SS_FliI/YscN"/>
</dbReference>
<dbReference type="InterPro" id="IPR013380">
    <property type="entry name" value="ATPase_T3SS_SctN"/>
</dbReference>
<dbReference type="InterPro" id="IPR027417">
    <property type="entry name" value="P-loop_NTPase"/>
</dbReference>
<dbReference type="InterPro" id="IPR040627">
    <property type="entry name" value="T3SS_ATPase_C"/>
</dbReference>
<dbReference type="NCBIfam" id="TIGR01026">
    <property type="entry name" value="fliI_yscN"/>
    <property type="match status" value="1"/>
</dbReference>
<dbReference type="NCBIfam" id="TIGR02546">
    <property type="entry name" value="III_secr_ATP"/>
    <property type="match status" value="1"/>
</dbReference>
<dbReference type="NCBIfam" id="NF006575">
    <property type="entry name" value="PRK09099.1"/>
    <property type="match status" value="1"/>
</dbReference>
<dbReference type="PANTHER" id="PTHR15184">
    <property type="entry name" value="ATP SYNTHASE"/>
    <property type="match status" value="1"/>
</dbReference>
<dbReference type="PANTHER" id="PTHR15184:SF9">
    <property type="entry name" value="SPI-1 TYPE 3 SECRETION SYSTEM ATPASE"/>
    <property type="match status" value="1"/>
</dbReference>
<dbReference type="Pfam" id="PF00006">
    <property type="entry name" value="ATP-synt_ab"/>
    <property type="match status" value="1"/>
</dbReference>
<dbReference type="Pfam" id="PF02874">
    <property type="entry name" value="ATP-synt_ab_N"/>
    <property type="match status" value="1"/>
</dbReference>
<dbReference type="Pfam" id="PF18269">
    <property type="entry name" value="T3SS_ATPase_C"/>
    <property type="match status" value="1"/>
</dbReference>
<dbReference type="SMART" id="SM00382">
    <property type="entry name" value="AAA"/>
    <property type="match status" value="1"/>
</dbReference>
<dbReference type="SUPFAM" id="SSF52540">
    <property type="entry name" value="P-loop containing nucleoside triphosphate hydrolases"/>
    <property type="match status" value="1"/>
</dbReference>
<dbReference type="PROSITE" id="PS00152">
    <property type="entry name" value="ATPASE_ALPHA_BETA"/>
    <property type="match status" value="1"/>
</dbReference>
<comment type="function">
    <text evidence="1 2">ATPase component of the type III secretion system (T3SS), also called injectisome, which is used to inject bacterial effector proteins into eukaryotic host cells (By similarity). Acts as a molecular motor to provide the energy that is required for the export of proteins (By similarity). Required for type III secretion apparatus (T3SA) formation, proper protein secretion, host cell invasion and virulence (By similarity). May play a critical role in T3SS substrate recognition, disassembly of the effector/chaperone complex and unfolding of the effector in an ATP-dependent manner prior to secretion (By similarity).</text>
</comment>
<comment type="catalytic activity">
    <reaction evidence="2">
        <text>ATP + H2O + cellular proteinSide 1 = ADP + phosphate + cellular proteinSide 2.</text>
        <dbReference type="EC" id="7.4.2.8"/>
    </reaction>
</comment>
<comment type="subunit">
    <text evidence="2">The core secretion machinery of the T3SS is composed of approximately 20 different proteins, including cytoplasmic components, a base, an export apparatus and a needle (By similarity). This subunit is part of the cytosolic complex (By similarity). Forms homohexamers (By similarity).</text>
</comment>
<comment type="subcellular location">
    <subcellularLocation>
        <location evidence="2">Cytoplasm</location>
    </subcellularLocation>
</comment>
<comment type="similarity">
    <text evidence="3">Belongs to the ATPase alpha/beta chains family. T3SS ATPase subfamily.</text>
</comment>
<protein>
    <recommendedName>
        <fullName evidence="2">Type 3 secretion system ATPase</fullName>
        <shortName evidence="2">T3SS ATPase</shortName>
        <ecNumber evidence="2">7.4.2.8</ecNumber>
    </recommendedName>
</protein>
<feature type="chain" id="PRO_0000144700" description="Type 3 secretion system ATPase">
    <location>
        <begin position="1"/>
        <end position="442"/>
    </location>
</feature>
<feature type="binding site" evidence="2">
    <location>
        <begin position="173"/>
        <end position="178"/>
    </location>
    <ligand>
        <name>ATP</name>
        <dbReference type="ChEBI" id="CHEBI:30616"/>
    </ligand>
</feature>
<accession>P80153</accession>
<evidence type="ECO:0000250" key="1">
    <source>
        <dbReference type="UniProtKB" id="P0A1B9"/>
    </source>
</evidence>
<evidence type="ECO:0000250" key="2">
    <source>
        <dbReference type="UniProtKB" id="P0A1C1"/>
    </source>
</evidence>
<evidence type="ECO:0000305" key="3"/>
<sequence>MLAETPLLETTLERELATLAVGRRYGKVVEVVGTMLKVAGVQVSLGEVCELRQRDGTLLQRAEVVGFSRDLALLAPFGELIGLSRETRVIGLGRPLAVPVGPALLGRVLDGLGEPSDGQGAIACDTWVPIQAQAPDPMRRRLIEHPMPTGVRIVDGLMTLGEGQRMGIFAAAGVGKSTLMGMFARGTQCDVNVIVLIGERGREVREFIELILGADGLARSVVVCATSDRSSIERAKAAYVGTAIAEYFRDRGLRVLLMMDSLTRFARAQREIGLAAGEPPTRRGFPPSVFAELPRLLERAGMGESGSITAFYTVLAEDDTGSDPIAEEVRGILDGHLILSREIAAKNQYPAIDVLASLSRVMSQIVPYDHSQAAGRLRRLLAKYNEVETLVQVGEYRQGSDAVADEAIDRIDAIRDFLSQPTDQLSAYENTLELLTSVTDDA</sequence>
<gene>
    <name evidence="2" type="primary">sctN</name>
    <name type="synonym">hrpB6</name>
</gene>
<keyword id="KW-0067">ATP-binding</keyword>
<keyword id="KW-0963">Cytoplasm</keyword>
<keyword id="KW-0928">Hypersensitive response elicitation</keyword>
<keyword id="KW-0547">Nucleotide-binding</keyword>
<keyword id="KW-0653">Protein transport</keyword>
<keyword id="KW-1278">Translocase</keyword>
<keyword id="KW-0813">Transport</keyword>
<keyword id="KW-0843">Virulence</keyword>
<reference key="1">
    <citation type="journal article" date="1992" name="Mol. Plant Microbe Interact.">
        <title>Determinants of pathogenicity in Xanthomonas campestris pv. vesicatoria are related to proteins involved in secretion in bacterial pathogens of animals.</title>
        <authorList>
            <person name="Fenselau S."/>
            <person name="Balbo I."/>
            <person name="Bonas U."/>
        </authorList>
    </citation>
    <scope>NUCLEOTIDE SEQUENCE [GENOMIC DNA]</scope>
    <source>
        <strain>Isolate 75-3</strain>
    </source>
</reference>
<organism>
    <name type="scientific">Xanthomonas euvesicatoria</name>
    <dbReference type="NCBI Taxonomy" id="456327"/>
    <lineage>
        <taxon>Bacteria</taxon>
        <taxon>Pseudomonadati</taxon>
        <taxon>Pseudomonadota</taxon>
        <taxon>Gammaproteobacteria</taxon>
        <taxon>Lysobacterales</taxon>
        <taxon>Lysobacteraceae</taxon>
        <taxon>Xanthomonas</taxon>
    </lineage>
</organism>
<name>SCTN_XANEU</name>
<proteinExistence type="inferred from homology"/>